<evidence type="ECO:0000255" key="1">
    <source>
        <dbReference type="HAMAP-Rule" id="MF_00006"/>
    </source>
</evidence>
<keyword id="KW-0028">Amino-acid biosynthesis</keyword>
<keyword id="KW-0055">Arginine biosynthesis</keyword>
<keyword id="KW-0963">Cytoplasm</keyword>
<keyword id="KW-0456">Lyase</keyword>
<name>ARLY_ECOUT</name>
<feature type="chain" id="PRO_1000000479" description="Argininosuccinate lyase">
    <location>
        <begin position="1"/>
        <end position="457"/>
    </location>
</feature>
<proteinExistence type="inferred from homology"/>
<accession>Q1R3V1</accession>
<sequence length="457" mass="50234">MALWGGRFTQAADQRFKQFNDSLRFDYRLAEQDIVGSVAWSKALVTVGVLTAEEQAQLEEALNVLLEDVRARPQQILESDAEDIHSWVEGKLIDKVGQLGKKLHTGRSRNDQVATDLKLWCKDTVSELLTANRQLQSALVETAQNNQDAVMPGYTHLQRAQPVTFAHWCLAYVEMLARDESRLQDALKRLDVSPLGCGALAGTAYEIDREQLAGWLGFASATRNSLDSVSDRDHVLELLSAAAIGMVHLSRFAEDLIFFNTGEAGFVELSDRVTSGSSLMPQKKNPDALELIRGKCGRVQGALTGMMMTLKGLPLAYNKDMQEDKEGLFDALDTWLDCLHMAALVLDGIQVKRPRCQEAAQQGYANATELADYLVAKGVPFREAHHIVGEAVVEAIRQGKALEDLPLSELQKFSQVIGEDVYPILSLQSCLDKRAAKGGVSPQQVAQAIAFAQARLG</sequence>
<organism>
    <name type="scientific">Escherichia coli (strain UTI89 / UPEC)</name>
    <dbReference type="NCBI Taxonomy" id="364106"/>
    <lineage>
        <taxon>Bacteria</taxon>
        <taxon>Pseudomonadati</taxon>
        <taxon>Pseudomonadota</taxon>
        <taxon>Gammaproteobacteria</taxon>
        <taxon>Enterobacterales</taxon>
        <taxon>Enterobacteriaceae</taxon>
        <taxon>Escherichia</taxon>
    </lineage>
</organism>
<protein>
    <recommendedName>
        <fullName evidence="1">Argininosuccinate lyase</fullName>
        <shortName evidence="1">ASAL</shortName>
        <ecNumber evidence="1">4.3.2.1</ecNumber>
    </recommendedName>
    <alternativeName>
        <fullName evidence="1">Arginosuccinase</fullName>
    </alternativeName>
</protein>
<reference key="1">
    <citation type="journal article" date="2006" name="Proc. Natl. Acad. Sci. U.S.A.">
        <title>Identification of genes subject to positive selection in uropathogenic strains of Escherichia coli: a comparative genomics approach.</title>
        <authorList>
            <person name="Chen S.L."/>
            <person name="Hung C.-S."/>
            <person name="Xu J."/>
            <person name="Reigstad C.S."/>
            <person name="Magrini V."/>
            <person name="Sabo A."/>
            <person name="Blasiar D."/>
            <person name="Bieri T."/>
            <person name="Meyer R.R."/>
            <person name="Ozersky P."/>
            <person name="Armstrong J.R."/>
            <person name="Fulton R.S."/>
            <person name="Latreille J.P."/>
            <person name="Spieth J."/>
            <person name="Hooton T.M."/>
            <person name="Mardis E.R."/>
            <person name="Hultgren S.J."/>
            <person name="Gordon J.I."/>
        </authorList>
    </citation>
    <scope>NUCLEOTIDE SEQUENCE [LARGE SCALE GENOMIC DNA]</scope>
    <source>
        <strain>UTI89 / UPEC</strain>
    </source>
</reference>
<comment type="catalytic activity">
    <reaction evidence="1">
        <text>2-(N(omega)-L-arginino)succinate = fumarate + L-arginine</text>
        <dbReference type="Rhea" id="RHEA:24020"/>
        <dbReference type="ChEBI" id="CHEBI:29806"/>
        <dbReference type="ChEBI" id="CHEBI:32682"/>
        <dbReference type="ChEBI" id="CHEBI:57472"/>
        <dbReference type="EC" id="4.3.2.1"/>
    </reaction>
</comment>
<comment type="pathway">
    <text evidence="1">Amino-acid biosynthesis; L-arginine biosynthesis; L-arginine from L-ornithine and carbamoyl phosphate: step 3/3.</text>
</comment>
<comment type="subcellular location">
    <subcellularLocation>
        <location evidence="1">Cytoplasm</location>
    </subcellularLocation>
</comment>
<comment type="similarity">
    <text evidence="1">Belongs to the lyase 1 family. Argininosuccinate lyase subfamily.</text>
</comment>
<dbReference type="EC" id="4.3.2.1" evidence="1"/>
<dbReference type="EMBL" id="CP000243">
    <property type="protein sequence ID" value="ABE09963.1"/>
    <property type="molecule type" value="Genomic_DNA"/>
</dbReference>
<dbReference type="RefSeq" id="WP_001230079.1">
    <property type="nucleotide sequence ID" value="NZ_CP064825.1"/>
</dbReference>
<dbReference type="SMR" id="Q1R3V1"/>
<dbReference type="KEGG" id="eci:UTI89_C4551"/>
<dbReference type="HOGENOM" id="CLU_027272_2_3_6"/>
<dbReference type="UniPathway" id="UPA00068">
    <property type="reaction ID" value="UER00114"/>
</dbReference>
<dbReference type="Proteomes" id="UP000001952">
    <property type="component" value="Chromosome"/>
</dbReference>
<dbReference type="GO" id="GO:0005829">
    <property type="term" value="C:cytosol"/>
    <property type="evidence" value="ECO:0007669"/>
    <property type="project" value="TreeGrafter"/>
</dbReference>
<dbReference type="GO" id="GO:0004056">
    <property type="term" value="F:argininosuccinate lyase activity"/>
    <property type="evidence" value="ECO:0007669"/>
    <property type="project" value="UniProtKB-UniRule"/>
</dbReference>
<dbReference type="GO" id="GO:0042450">
    <property type="term" value="P:arginine biosynthetic process via ornithine"/>
    <property type="evidence" value="ECO:0007669"/>
    <property type="project" value="InterPro"/>
</dbReference>
<dbReference type="GO" id="GO:0006526">
    <property type="term" value="P:L-arginine biosynthetic process"/>
    <property type="evidence" value="ECO:0007669"/>
    <property type="project" value="UniProtKB-UniRule"/>
</dbReference>
<dbReference type="CDD" id="cd01359">
    <property type="entry name" value="Argininosuccinate_lyase"/>
    <property type="match status" value="1"/>
</dbReference>
<dbReference type="FunFam" id="1.10.275.10:FF:000004">
    <property type="entry name" value="Argininosuccinate lyase"/>
    <property type="match status" value="1"/>
</dbReference>
<dbReference type="FunFam" id="1.10.40.30:FF:000001">
    <property type="entry name" value="Argininosuccinate lyase"/>
    <property type="match status" value="1"/>
</dbReference>
<dbReference type="FunFam" id="1.20.200.10:FF:000006">
    <property type="entry name" value="Argininosuccinate lyase"/>
    <property type="match status" value="1"/>
</dbReference>
<dbReference type="Gene3D" id="1.10.40.30">
    <property type="entry name" value="Fumarase/aspartase (C-terminal domain)"/>
    <property type="match status" value="1"/>
</dbReference>
<dbReference type="Gene3D" id="1.20.200.10">
    <property type="entry name" value="Fumarase/aspartase (Central domain)"/>
    <property type="match status" value="1"/>
</dbReference>
<dbReference type="Gene3D" id="1.10.275.10">
    <property type="entry name" value="Fumarase/aspartase (N-terminal domain)"/>
    <property type="match status" value="1"/>
</dbReference>
<dbReference type="HAMAP" id="MF_00006">
    <property type="entry name" value="Arg_succ_lyase"/>
    <property type="match status" value="1"/>
</dbReference>
<dbReference type="InterPro" id="IPR029419">
    <property type="entry name" value="Arg_succ_lyase_C"/>
</dbReference>
<dbReference type="InterPro" id="IPR009049">
    <property type="entry name" value="Argininosuccinate_lyase"/>
</dbReference>
<dbReference type="InterPro" id="IPR024083">
    <property type="entry name" value="Fumarase/histidase_N"/>
</dbReference>
<dbReference type="InterPro" id="IPR020557">
    <property type="entry name" value="Fumarate_lyase_CS"/>
</dbReference>
<dbReference type="InterPro" id="IPR000362">
    <property type="entry name" value="Fumarate_lyase_fam"/>
</dbReference>
<dbReference type="InterPro" id="IPR022761">
    <property type="entry name" value="Fumarate_lyase_N"/>
</dbReference>
<dbReference type="InterPro" id="IPR008948">
    <property type="entry name" value="L-Aspartase-like"/>
</dbReference>
<dbReference type="NCBIfam" id="TIGR00838">
    <property type="entry name" value="argH"/>
    <property type="match status" value="1"/>
</dbReference>
<dbReference type="NCBIfam" id="NF008964">
    <property type="entry name" value="PRK12308.1"/>
    <property type="match status" value="1"/>
</dbReference>
<dbReference type="PANTHER" id="PTHR43814">
    <property type="entry name" value="ARGININOSUCCINATE LYASE"/>
    <property type="match status" value="1"/>
</dbReference>
<dbReference type="PANTHER" id="PTHR43814:SF1">
    <property type="entry name" value="ARGININOSUCCINATE LYASE"/>
    <property type="match status" value="1"/>
</dbReference>
<dbReference type="Pfam" id="PF14698">
    <property type="entry name" value="ASL_C2"/>
    <property type="match status" value="1"/>
</dbReference>
<dbReference type="Pfam" id="PF00206">
    <property type="entry name" value="Lyase_1"/>
    <property type="match status" value="1"/>
</dbReference>
<dbReference type="PRINTS" id="PR00145">
    <property type="entry name" value="ARGSUCLYASE"/>
</dbReference>
<dbReference type="PRINTS" id="PR00149">
    <property type="entry name" value="FUMRATELYASE"/>
</dbReference>
<dbReference type="SUPFAM" id="SSF48557">
    <property type="entry name" value="L-aspartase-like"/>
    <property type="match status" value="1"/>
</dbReference>
<dbReference type="PROSITE" id="PS00163">
    <property type="entry name" value="FUMARATE_LYASES"/>
    <property type="match status" value="1"/>
</dbReference>
<gene>
    <name evidence="1" type="primary">argH</name>
    <name type="ordered locus">UTI89_C4551</name>
</gene>